<reference key="1">
    <citation type="submission" date="2006-10" db="EMBL/GenBank/DDBJ databases">
        <title>Complete sequence of chromosome of Pelobacter propionicus DSM 2379.</title>
        <authorList>
            <consortium name="US DOE Joint Genome Institute"/>
            <person name="Copeland A."/>
            <person name="Lucas S."/>
            <person name="Lapidus A."/>
            <person name="Barry K."/>
            <person name="Detter J.C."/>
            <person name="Glavina del Rio T."/>
            <person name="Hammon N."/>
            <person name="Israni S."/>
            <person name="Dalin E."/>
            <person name="Tice H."/>
            <person name="Pitluck S."/>
            <person name="Saunders E."/>
            <person name="Brettin T."/>
            <person name="Bruce D."/>
            <person name="Han C."/>
            <person name="Tapia R."/>
            <person name="Schmutz J."/>
            <person name="Larimer F."/>
            <person name="Land M."/>
            <person name="Hauser L."/>
            <person name="Kyrpides N."/>
            <person name="Kim E."/>
            <person name="Lovley D."/>
            <person name="Richardson P."/>
        </authorList>
    </citation>
    <scope>NUCLEOTIDE SEQUENCE [LARGE SCALE GENOMIC DNA]</scope>
    <source>
        <strain>DSM 2379 / NBRC 103807 / OttBd1</strain>
    </source>
</reference>
<name>HIS4_PELPD</name>
<dbReference type="EC" id="5.3.1.16" evidence="1"/>
<dbReference type="EMBL" id="CP000482">
    <property type="protein sequence ID" value="ABL00652.1"/>
    <property type="molecule type" value="Genomic_DNA"/>
</dbReference>
<dbReference type="RefSeq" id="WP_011736887.1">
    <property type="nucleotide sequence ID" value="NC_008609.1"/>
</dbReference>
<dbReference type="SMR" id="A1ATI1"/>
<dbReference type="STRING" id="338966.Ppro_3056"/>
<dbReference type="KEGG" id="ppd:Ppro_3056"/>
<dbReference type="eggNOG" id="COG0106">
    <property type="taxonomic scope" value="Bacteria"/>
</dbReference>
<dbReference type="HOGENOM" id="CLU_048577_1_1_7"/>
<dbReference type="OrthoDB" id="9807749at2"/>
<dbReference type="UniPathway" id="UPA00031">
    <property type="reaction ID" value="UER00009"/>
</dbReference>
<dbReference type="Proteomes" id="UP000006732">
    <property type="component" value="Chromosome"/>
</dbReference>
<dbReference type="GO" id="GO:0005737">
    <property type="term" value="C:cytoplasm"/>
    <property type="evidence" value="ECO:0007669"/>
    <property type="project" value="UniProtKB-SubCell"/>
</dbReference>
<dbReference type="GO" id="GO:0003949">
    <property type="term" value="F:1-(5-phosphoribosyl)-5-[(5-phosphoribosylamino)methylideneamino]imidazole-4-carboxamide isomerase activity"/>
    <property type="evidence" value="ECO:0007669"/>
    <property type="project" value="UniProtKB-UniRule"/>
</dbReference>
<dbReference type="GO" id="GO:0000105">
    <property type="term" value="P:L-histidine biosynthetic process"/>
    <property type="evidence" value="ECO:0007669"/>
    <property type="project" value="UniProtKB-UniRule"/>
</dbReference>
<dbReference type="GO" id="GO:0000162">
    <property type="term" value="P:L-tryptophan biosynthetic process"/>
    <property type="evidence" value="ECO:0007669"/>
    <property type="project" value="TreeGrafter"/>
</dbReference>
<dbReference type="CDD" id="cd04732">
    <property type="entry name" value="HisA"/>
    <property type="match status" value="1"/>
</dbReference>
<dbReference type="FunFam" id="3.20.20.70:FF:000009">
    <property type="entry name" value="1-(5-phosphoribosyl)-5-[(5-phosphoribosylamino)methylideneamino] imidazole-4-carboxamide isomerase"/>
    <property type="match status" value="1"/>
</dbReference>
<dbReference type="Gene3D" id="3.20.20.70">
    <property type="entry name" value="Aldolase class I"/>
    <property type="match status" value="1"/>
</dbReference>
<dbReference type="HAMAP" id="MF_01014">
    <property type="entry name" value="HisA"/>
    <property type="match status" value="1"/>
</dbReference>
<dbReference type="InterPro" id="IPR013785">
    <property type="entry name" value="Aldolase_TIM"/>
</dbReference>
<dbReference type="InterPro" id="IPR006062">
    <property type="entry name" value="His_biosynth"/>
</dbReference>
<dbReference type="InterPro" id="IPR006063">
    <property type="entry name" value="HisA_bact_arch"/>
</dbReference>
<dbReference type="InterPro" id="IPR044524">
    <property type="entry name" value="Isoase_HisA-like"/>
</dbReference>
<dbReference type="InterPro" id="IPR023016">
    <property type="entry name" value="Isoase_HisA-like_bact"/>
</dbReference>
<dbReference type="InterPro" id="IPR011060">
    <property type="entry name" value="RibuloseP-bd_barrel"/>
</dbReference>
<dbReference type="NCBIfam" id="TIGR00007">
    <property type="entry name" value="1-(5-phosphoribosyl)-5-[(5-phosphoribosylamino)methylideneamino]imidazole-4-carboxamide isomerase"/>
    <property type="match status" value="1"/>
</dbReference>
<dbReference type="NCBIfam" id="NF010112">
    <property type="entry name" value="PRK13585.1"/>
    <property type="match status" value="1"/>
</dbReference>
<dbReference type="PANTHER" id="PTHR43090">
    <property type="entry name" value="1-(5-PHOSPHORIBOSYL)-5-[(5-PHOSPHORIBOSYLAMINO)METHYLIDENEAMINO] IMIDAZOLE-4-CARBOXAMIDE ISOMERASE"/>
    <property type="match status" value="1"/>
</dbReference>
<dbReference type="PANTHER" id="PTHR43090:SF2">
    <property type="entry name" value="1-(5-PHOSPHORIBOSYL)-5-[(5-PHOSPHORIBOSYLAMINO)METHYLIDENEAMINO] IMIDAZOLE-4-CARBOXAMIDE ISOMERASE"/>
    <property type="match status" value="1"/>
</dbReference>
<dbReference type="Pfam" id="PF00977">
    <property type="entry name" value="His_biosynth"/>
    <property type="match status" value="1"/>
</dbReference>
<dbReference type="SUPFAM" id="SSF51366">
    <property type="entry name" value="Ribulose-phoshate binding barrel"/>
    <property type="match status" value="1"/>
</dbReference>
<proteinExistence type="inferred from homology"/>
<sequence length="245" mass="25729">MLVIPAIDLKDGVCVRLEQGLMDRDTVFNDNPASQALEWQNQGAELLHIVDLDGAFAGTPRNKAAIEAIVKAISIPAQLGGGIRDLATIESYLSLGLSRVIIGTAAQRNPQLVKEACAKFPGRIVVGIDAKAGMVAVQGWAEVTGITAVDLARKFEDCGVAAIIYTDISRDGMLQGPNIEATRSLAEAVAIPVIASGGVSTLKDIENLMTIERSGVTGVITGKAIYTGAIRLHEAIALTGKDNQE</sequence>
<protein>
    <recommendedName>
        <fullName evidence="1">1-(5-phosphoribosyl)-5-[(5-phosphoribosylamino)methylideneamino] imidazole-4-carboxamide isomerase</fullName>
        <ecNumber evidence="1">5.3.1.16</ecNumber>
    </recommendedName>
    <alternativeName>
        <fullName evidence="1">Phosphoribosylformimino-5-aminoimidazole carboxamide ribotide isomerase</fullName>
    </alternativeName>
</protein>
<comment type="catalytic activity">
    <reaction evidence="1">
        <text>1-(5-phospho-beta-D-ribosyl)-5-[(5-phospho-beta-D-ribosylamino)methylideneamino]imidazole-4-carboxamide = 5-[(5-phospho-1-deoxy-D-ribulos-1-ylimino)methylamino]-1-(5-phospho-beta-D-ribosyl)imidazole-4-carboxamide</text>
        <dbReference type="Rhea" id="RHEA:15469"/>
        <dbReference type="ChEBI" id="CHEBI:58435"/>
        <dbReference type="ChEBI" id="CHEBI:58525"/>
        <dbReference type="EC" id="5.3.1.16"/>
    </reaction>
</comment>
<comment type="pathway">
    <text evidence="1">Amino-acid biosynthesis; L-histidine biosynthesis; L-histidine from 5-phospho-alpha-D-ribose 1-diphosphate: step 4/9.</text>
</comment>
<comment type="subcellular location">
    <subcellularLocation>
        <location evidence="1">Cytoplasm</location>
    </subcellularLocation>
</comment>
<comment type="similarity">
    <text evidence="1">Belongs to the HisA/HisF family.</text>
</comment>
<organism>
    <name type="scientific">Pelobacter propionicus (strain DSM 2379 / NBRC 103807 / OttBd1)</name>
    <dbReference type="NCBI Taxonomy" id="338966"/>
    <lineage>
        <taxon>Bacteria</taxon>
        <taxon>Pseudomonadati</taxon>
        <taxon>Thermodesulfobacteriota</taxon>
        <taxon>Desulfuromonadia</taxon>
        <taxon>Desulfuromonadales</taxon>
        <taxon>Desulfuromonadaceae</taxon>
        <taxon>Pelobacter</taxon>
    </lineage>
</organism>
<keyword id="KW-0028">Amino-acid biosynthesis</keyword>
<keyword id="KW-0963">Cytoplasm</keyword>
<keyword id="KW-0368">Histidine biosynthesis</keyword>
<keyword id="KW-0413">Isomerase</keyword>
<keyword id="KW-1185">Reference proteome</keyword>
<evidence type="ECO:0000255" key="1">
    <source>
        <dbReference type="HAMAP-Rule" id="MF_01014"/>
    </source>
</evidence>
<accession>A1ATI1</accession>
<gene>
    <name evidence="1" type="primary">hisA</name>
    <name type="ordered locus">Ppro_3056</name>
</gene>
<feature type="chain" id="PRO_0000290504" description="1-(5-phosphoribosyl)-5-[(5-phosphoribosylamino)methylideneamino] imidazole-4-carboxamide isomerase">
    <location>
        <begin position="1"/>
        <end position="245"/>
    </location>
</feature>
<feature type="active site" description="Proton acceptor" evidence="1">
    <location>
        <position position="8"/>
    </location>
</feature>
<feature type="active site" description="Proton donor" evidence="1">
    <location>
        <position position="129"/>
    </location>
</feature>